<gene>
    <name type="primary">cyoB</name>
    <name type="ordered locus">BU471</name>
</gene>
<accession>P57543</accession>
<dbReference type="EC" id="7.1.1.3" evidence="2"/>
<dbReference type="EMBL" id="BA000003">
    <property type="protein sequence ID" value="BAB13168.1"/>
    <property type="molecule type" value="Genomic_DNA"/>
</dbReference>
<dbReference type="RefSeq" id="NP_240282.1">
    <property type="nucleotide sequence ID" value="NC_002528.1"/>
</dbReference>
<dbReference type="RefSeq" id="WP_010896132.1">
    <property type="nucleotide sequence ID" value="NC_002528.1"/>
</dbReference>
<dbReference type="SMR" id="P57543"/>
<dbReference type="STRING" id="563178.BUAP5A_464"/>
<dbReference type="EnsemblBacteria" id="BAB13168">
    <property type="protein sequence ID" value="BAB13168"/>
    <property type="gene ID" value="BAB13168"/>
</dbReference>
<dbReference type="KEGG" id="buc:BU471"/>
<dbReference type="PATRIC" id="fig|107806.10.peg.480"/>
<dbReference type="eggNOG" id="COG0843">
    <property type="taxonomic scope" value="Bacteria"/>
</dbReference>
<dbReference type="HOGENOM" id="CLU_011899_7_1_6"/>
<dbReference type="Proteomes" id="UP000001806">
    <property type="component" value="Chromosome"/>
</dbReference>
<dbReference type="GO" id="GO:0005886">
    <property type="term" value="C:plasma membrane"/>
    <property type="evidence" value="ECO:0007669"/>
    <property type="project" value="UniProtKB-SubCell"/>
</dbReference>
<dbReference type="GO" id="GO:0009486">
    <property type="term" value="F:cytochrome bo3 ubiquinol oxidase activity"/>
    <property type="evidence" value="ECO:0007669"/>
    <property type="project" value="UniProtKB-EC"/>
</dbReference>
<dbReference type="GO" id="GO:0004129">
    <property type="term" value="F:cytochrome-c oxidase activity"/>
    <property type="evidence" value="ECO:0007669"/>
    <property type="project" value="InterPro"/>
</dbReference>
<dbReference type="GO" id="GO:0020037">
    <property type="term" value="F:heme binding"/>
    <property type="evidence" value="ECO:0007669"/>
    <property type="project" value="InterPro"/>
</dbReference>
<dbReference type="GO" id="GO:0046872">
    <property type="term" value="F:metal ion binding"/>
    <property type="evidence" value="ECO:0007669"/>
    <property type="project" value="UniProtKB-KW"/>
</dbReference>
<dbReference type="GO" id="GO:0016682">
    <property type="term" value="F:oxidoreductase activity, acting on diphenols and related substances as donors, oxygen as acceptor"/>
    <property type="evidence" value="ECO:0007669"/>
    <property type="project" value="InterPro"/>
</dbReference>
<dbReference type="GO" id="GO:0009060">
    <property type="term" value="P:aerobic respiration"/>
    <property type="evidence" value="ECO:0007669"/>
    <property type="project" value="InterPro"/>
</dbReference>
<dbReference type="GO" id="GO:0015990">
    <property type="term" value="P:electron transport coupled proton transport"/>
    <property type="evidence" value="ECO:0007669"/>
    <property type="project" value="TreeGrafter"/>
</dbReference>
<dbReference type="GO" id="GO:0022904">
    <property type="term" value="P:respiratory electron transport chain"/>
    <property type="evidence" value="ECO:0007669"/>
    <property type="project" value="TreeGrafter"/>
</dbReference>
<dbReference type="CDD" id="cd01662">
    <property type="entry name" value="Ubiquinol_Oxidase_I"/>
    <property type="match status" value="1"/>
</dbReference>
<dbReference type="FunFam" id="1.20.210.10:FF:000002">
    <property type="entry name" value="Cytochrome o ubiquinol oxidase, subunit I"/>
    <property type="match status" value="1"/>
</dbReference>
<dbReference type="Gene3D" id="1.20.210.10">
    <property type="entry name" value="Cytochrome c oxidase-like, subunit I domain"/>
    <property type="match status" value="1"/>
</dbReference>
<dbReference type="InterPro" id="IPR023616">
    <property type="entry name" value="Cyt_c_oxase-like_su1_dom"/>
</dbReference>
<dbReference type="InterPro" id="IPR036927">
    <property type="entry name" value="Cyt_c_oxase-like_su1_sf"/>
</dbReference>
<dbReference type="InterPro" id="IPR000883">
    <property type="entry name" value="Cyt_C_Oxase_1"/>
</dbReference>
<dbReference type="InterPro" id="IPR023615">
    <property type="entry name" value="Cyt_c_Oxase_su1_BS"/>
</dbReference>
<dbReference type="InterPro" id="IPR014207">
    <property type="entry name" value="Cyt_c_ubiqinol_oxidase_su1"/>
</dbReference>
<dbReference type="NCBIfam" id="TIGR02843">
    <property type="entry name" value="CyoB"/>
    <property type="match status" value="1"/>
</dbReference>
<dbReference type="PANTHER" id="PTHR10422:SF35">
    <property type="entry name" value="CYTOCHROME BO(3) UBIQUINOL OXIDASE SUBUNIT 1"/>
    <property type="match status" value="1"/>
</dbReference>
<dbReference type="PANTHER" id="PTHR10422">
    <property type="entry name" value="CYTOCHROME C OXIDASE SUBUNIT 1"/>
    <property type="match status" value="1"/>
</dbReference>
<dbReference type="Pfam" id="PF00115">
    <property type="entry name" value="COX1"/>
    <property type="match status" value="1"/>
</dbReference>
<dbReference type="PRINTS" id="PR01165">
    <property type="entry name" value="CYCOXIDASEI"/>
</dbReference>
<dbReference type="SUPFAM" id="SSF81442">
    <property type="entry name" value="Cytochrome c oxidase subunit I-like"/>
    <property type="match status" value="1"/>
</dbReference>
<dbReference type="PROSITE" id="PS50855">
    <property type="entry name" value="COX1"/>
    <property type="match status" value="1"/>
</dbReference>
<dbReference type="PROSITE" id="PS00077">
    <property type="entry name" value="COX1_CUB"/>
    <property type="match status" value="1"/>
</dbReference>
<proteinExistence type="inferred from homology"/>
<feature type="chain" id="PRO_0000183479" description="Cytochrome bo(3) ubiquinol oxidase subunit 1">
    <location>
        <begin position="1"/>
        <end position="662"/>
    </location>
</feature>
<feature type="topological domain" description="Extracellular" evidence="3">
    <location>
        <begin position="1"/>
        <end position="14"/>
    </location>
</feature>
<feature type="transmembrane region" description="Helical" evidence="3">
    <location>
        <begin position="15"/>
        <end position="35"/>
    </location>
</feature>
<feature type="topological domain" description="Cytoplasmic" evidence="3">
    <location>
        <begin position="36"/>
        <end position="58"/>
    </location>
</feature>
<feature type="transmembrane region" description="Helical" evidence="3">
    <location>
        <begin position="59"/>
        <end position="79"/>
    </location>
</feature>
<feature type="topological domain" description="Extracellular" evidence="3">
    <location>
        <begin position="80"/>
        <end position="106"/>
    </location>
</feature>
<feature type="transmembrane region" description="Helical" evidence="3">
    <location>
        <begin position="107"/>
        <end position="127"/>
    </location>
</feature>
<feature type="topological domain" description="Cytoplasmic" evidence="3">
    <location>
        <begin position="128"/>
        <end position="145"/>
    </location>
</feature>
<feature type="transmembrane region" description="Helical" evidence="3">
    <location>
        <begin position="146"/>
        <end position="166"/>
    </location>
</feature>
<feature type="topological domain" description="Extracellular" evidence="3">
    <location>
        <begin position="167"/>
        <end position="189"/>
    </location>
</feature>
<feature type="transmembrane region" description="Helical" evidence="3">
    <location>
        <begin position="190"/>
        <end position="210"/>
    </location>
</feature>
<feature type="topological domain" description="Cytoplasmic" evidence="3">
    <location>
        <begin position="211"/>
        <end position="232"/>
    </location>
</feature>
<feature type="transmembrane region" description="Helical" evidence="3">
    <location>
        <begin position="233"/>
        <end position="253"/>
    </location>
</feature>
<feature type="topological domain" description="Extracellular" evidence="3">
    <location>
        <begin position="254"/>
        <end position="277"/>
    </location>
</feature>
<feature type="transmembrane region" description="Helical" evidence="3">
    <location>
        <begin position="278"/>
        <end position="298"/>
    </location>
</feature>
<feature type="topological domain" description="Cytoplasmic" evidence="3">
    <location>
        <begin position="299"/>
        <end position="309"/>
    </location>
</feature>
<feature type="transmembrane region" description="Helical" evidence="3">
    <location>
        <begin position="310"/>
        <end position="330"/>
    </location>
</feature>
<feature type="topological domain" description="Extracellular" evidence="3">
    <location>
        <begin position="331"/>
        <end position="346"/>
    </location>
</feature>
<feature type="transmembrane region" description="Helical" evidence="3">
    <location>
        <begin position="347"/>
        <end position="367"/>
    </location>
</feature>
<feature type="topological domain" description="Cytoplasmic" evidence="3">
    <location>
        <begin position="368"/>
        <end position="380"/>
    </location>
</feature>
<feature type="transmembrane region" description="Helical" evidence="3">
    <location>
        <begin position="381"/>
        <end position="401"/>
    </location>
</feature>
<feature type="topological domain" description="Extracellular" evidence="3">
    <location>
        <begin position="402"/>
        <end position="413"/>
    </location>
</feature>
<feature type="transmembrane region" description="Helical" evidence="3">
    <location>
        <begin position="414"/>
        <end position="434"/>
    </location>
</feature>
<feature type="topological domain" description="Cytoplasmic" evidence="3">
    <location>
        <begin position="435"/>
        <end position="456"/>
    </location>
</feature>
<feature type="transmembrane region" description="Helical" evidence="3">
    <location>
        <begin position="457"/>
        <end position="477"/>
    </location>
</feature>
<feature type="topological domain" description="Extracellular" evidence="3">
    <location>
        <begin position="478"/>
        <end position="493"/>
    </location>
</feature>
<feature type="transmembrane region" description="Helical" evidence="3">
    <location>
        <begin position="494"/>
        <end position="514"/>
    </location>
</feature>
<feature type="topological domain" description="Cytoplasmic" evidence="3">
    <location>
        <begin position="515"/>
        <end position="586"/>
    </location>
</feature>
<feature type="transmembrane region" description="Helical" evidence="3">
    <location>
        <begin position="587"/>
        <end position="607"/>
    </location>
</feature>
<feature type="topological domain" description="Extracellular" evidence="3">
    <location>
        <position position="608"/>
    </location>
</feature>
<feature type="transmembrane region" description="Helical" evidence="3">
    <location>
        <begin position="609"/>
        <end position="629"/>
    </location>
</feature>
<feature type="topological domain" description="Cytoplasmic" evidence="3">
    <location>
        <begin position="630"/>
        <end position="662"/>
    </location>
</feature>
<feature type="binding site" evidence="2">
    <location>
        <position position="71"/>
    </location>
    <ligand>
        <name>a ubiquinone</name>
        <dbReference type="ChEBI" id="CHEBI:16389"/>
    </ligand>
</feature>
<feature type="binding site" evidence="2">
    <location>
        <position position="75"/>
    </location>
    <ligand>
        <name>a ubiquinone</name>
        <dbReference type="ChEBI" id="CHEBI:16389"/>
    </ligand>
</feature>
<feature type="binding site" evidence="2">
    <location>
        <position position="98"/>
    </location>
    <ligand>
        <name>a ubiquinone</name>
        <dbReference type="ChEBI" id="CHEBI:16389"/>
    </ligand>
</feature>
<feature type="binding site" description="axial binding residue" evidence="2">
    <location>
        <position position="106"/>
    </location>
    <ligand>
        <name>heme b</name>
        <dbReference type="ChEBI" id="CHEBI:60344"/>
    </ligand>
    <ligandPart>
        <name>Fe</name>
        <dbReference type="ChEBI" id="CHEBI:18248"/>
    </ligandPart>
</feature>
<feature type="binding site" evidence="2">
    <location>
        <position position="170"/>
    </location>
    <ligand>
        <name>heme b</name>
        <dbReference type="ChEBI" id="CHEBI:60344"/>
    </ligand>
</feature>
<feature type="binding site" evidence="2">
    <location>
        <position position="284"/>
    </location>
    <ligand>
        <name>Cu(2+)</name>
        <dbReference type="ChEBI" id="CHEBI:29036"/>
    </ligand>
</feature>
<feature type="binding site" evidence="2">
    <location>
        <position position="288"/>
    </location>
    <ligand>
        <name>Fe(II)-heme o</name>
        <dbReference type="ChEBI" id="CHEBI:60530"/>
    </ligand>
</feature>
<feature type="binding site" evidence="2">
    <location>
        <position position="333"/>
    </location>
    <ligand>
        <name>Cu(2+)</name>
        <dbReference type="ChEBI" id="CHEBI:29036"/>
    </ligand>
</feature>
<feature type="binding site" evidence="2">
    <location>
        <position position="334"/>
    </location>
    <ligand>
        <name>Cu(2+)</name>
        <dbReference type="ChEBI" id="CHEBI:29036"/>
    </ligand>
</feature>
<feature type="binding site" evidence="2">
    <location>
        <position position="411"/>
    </location>
    <ligand>
        <name>Fe(II)-heme o</name>
        <dbReference type="ChEBI" id="CHEBI:60530"/>
    </ligand>
</feature>
<feature type="binding site" description="axial binding residue" evidence="2">
    <location>
        <position position="419"/>
    </location>
    <ligand>
        <name>Fe(II)-heme o</name>
        <dbReference type="ChEBI" id="CHEBI:60530"/>
    </ligand>
    <ligandPart>
        <name>Fe</name>
        <dbReference type="ChEBI" id="CHEBI:18248"/>
    </ligandPart>
</feature>
<feature type="binding site" description="axial binding residue" evidence="2">
    <location>
        <position position="421"/>
    </location>
    <ligand>
        <name>heme b</name>
        <dbReference type="ChEBI" id="CHEBI:60344"/>
    </ligand>
    <ligandPart>
        <name>Fe</name>
        <dbReference type="ChEBI" id="CHEBI:18248"/>
    </ligandPart>
</feature>
<feature type="binding site" evidence="2">
    <location>
        <position position="481"/>
    </location>
    <ligand>
        <name>heme b</name>
        <dbReference type="ChEBI" id="CHEBI:60344"/>
    </ligand>
</feature>
<feature type="binding site" evidence="2">
    <location>
        <position position="482"/>
    </location>
    <ligand>
        <name>heme b</name>
        <dbReference type="ChEBI" id="CHEBI:60344"/>
    </ligand>
</feature>
<feature type="cross-link" description="1'-histidyl-3'-tyrosine (His-Tyr)" evidence="1">
    <location>
        <begin position="284"/>
        <end position="288"/>
    </location>
</feature>
<protein>
    <recommendedName>
        <fullName>Cytochrome bo(3) ubiquinol oxidase subunit 1</fullName>
        <ecNumber evidence="2">7.1.1.3</ecNumber>
    </recommendedName>
    <alternativeName>
        <fullName>Cytochrome o ubiquinol oxidase subunit 1</fullName>
        <shortName>Cytochrome o subunit 1</shortName>
    </alternativeName>
    <alternativeName>
        <fullName>Oxidase bo(3) subunit 1</fullName>
    </alternativeName>
    <alternativeName>
        <fullName>Ubiquinol oxidase polypeptide I</fullName>
    </alternativeName>
    <alternativeName>
        <fullName>Ubiquinol oxidase subunit 1</fullName>
    </alternativeName>
</protein>
<organism>
    <name type="scientific">Buchnera aphidicola subsp. Acyrthosiphon pisum (strain APS)</name>
    <name type="common">Acyrthosiphon pisum symbiotic bacterium</name>
    <dbReference type="NCBI Taxonomy" id="107806"/>
    <lineage>
        <taxon>Bacteria</taxon>
        <taxon>Pseudomonadati</taxon>
        <taxon>Pseudomonadota</taxon>
        <taxon>Gammaproteobacteria</taxon>
        <taxon>Enterobacterales</taxon>
        <taxon>Erwiniaceae</taxon>
        <taxon>Buchnera</taxon>
    </lineage>
</organism>
<evidence type="ECO:0000250" key="1"/>
<evidence type="ECO:0000250" key="2">
    <source>
        <dbReference type="UniProtKB" id="P0ABI8"/>
    </source>
</evidence>
<evidence type="ECO:0000255" key="3"/>
<evidence type="ECO:0000305" key="4"/>
<reference key="1">
    <citation type="journal article" date="2000" name="Nature">
        <title>Genome sequence of the endocellular bacterial symbiont of aphids Buchnera sp. APS.</title>
        <authorList>
            <person name="Shigenobu S."/>
            <person name="Watanabe H."/>
            <person name="Hattori M."/>
            <person name="Sakaki Y."/>
            <person name="Ishikawa H."/>
        </authorList>
    </citation>
    <scope>NUCLEOTIDE SEQUENCE [LARGE SCALE GENOMIC DNA]</scope>
    <source>
        <strain>APS</strain>
    </source>
</reference>
<keyword id="KW-1003">Cell membrane</keyword>
<keyword id="KW-0186">Copper</keyword>
<keyword id="KW-0249">Electron transport</keyword>
<keyword id="KW-0349">Heme</keyword>
<keyword id="KW-0375">Hydrogen ion transport</keyword>
<keyword id="KW-0406">Ion transport</keyword>
<keyword id="KW-0408">Iron</keyword>
<keyword id="KW-0472">Membrane</keyword>
<keyword id="KW-0479">Metal-binding</keyword>
<keyword id="KW-1185">Reference proteome</keyword>
<keyword id="KW-0679">Respiratory chain</keyword>
<keyword id="KW-1278">Translocase</keyword>
<keyword id="KW-0812">Transmembrane</keyword>
<keyword id="KW-1133">Transmembrane helix</keyword>
<keyword id="KW-0813">Transport</keyword>
<sequence>MFGKLTFDAIPYHEPIIMITYIAIILIALCIASTITYYKKWKYLWYEWFTTVDHKKISIMYGILAFVMLFRGFVDAILMRTQQVVASAGFKGFLPPHHYDQIFTAHGVIMIFFVAMPLVIGLMNLVIPLQIGARDVAFPFLNNLSFWLNVSSAVLLTLSLGIGEFAQTGWLAYPPLSGIKYSSGVGVDYWIWSLQISGVGTTLTGINFLVTILKMRAPGMSFFKMPVFTWTSLCTNILIVISFPVLTVTLVLLTLDRYFNFHFFTNDLGGNAMMYVNLIWIWGHPEVYILVLPVFGVFSEVVATFSKKRLFGYVSLVWATLSITILSFIVWLHHFFTMGAGADVNTFFGITTMIIAIPTGVKIFNWLFTIYQGRVHMHSSILWTLGFLVTFSIGGMTGVLLSVPPADFVLHNSLFLVAHFHNVIIGGVVFGCFAGINYWFPKLFGFVLNEIWGKRAFWFWIIGFFLAFIPLYFLGLMGMTRRLSQNIDSEFHMLLCIAAIGACFIGIGIICQVIQFFISIKERRHNLDLTGDPWDGRTLEWSTSSPAPLYNFAIIPKVEDRDDFWRNKEGQHYNKLINSINYHDIHMPKNTGLGFMISIFSLFFGFSAVWHITWLCILSFLAIIISLFINSLNEDTEYTISAEEIKKIEHQYWKNIQKAGLK</sequence>
<comment type="function">
    <text evidence="2">Cytochrome bo(3) ubiquinol oxidase is the terminal enzyme in the aerobic respiratory chain. Catalyzes the four-electron reduction of O2 to water, using a ubiquinol as a membrane soluble electron donor for molecular oxygen reduction. Has proton pump activity across the membrane in addition to electron transfer, pumping 2 protons/electron and generating a proton motive force. All the redox centers of this enzyme complex are located within the largest subunit, subunit I. Protons are probably pumped via D- and K- channels found in this subunit.</text>
</comment>
<comment type="catalytic activity">
    <reaction evidence="2">
        <text>2 a ubiquinol + O2 + n H(+)(in) = 2 a ubiquinone + 2 H2O + n H(+)(out)</text>
        <dbReference type="Rhea" id="RHEA:30251"/>
        <dbReference type="Rhea" id="RHEA-COMP:9565"/>
        <dbReference type="Rhea" id="RHEA-COMP:9566"/>
        <dbReference type="ChEBI" id="CHEBI:15377"/>
        <dbReference type="ChEBI" id="CHEBI:15378"/>
        <dbReference type="ChEBI" id="CHEBI:15379"/>
        <dbReference type="ChEBI" id="CHEBI:16389"/>
        <dbReference type="ChEBI" id="CHEBI:17976"/>
        <dbReference type="EC" id="7.1.1.3"/>
    </reaction>
</comment>
<comment type="cofactor">
    <cofactor evidence="2">
        <name>Cu(2+)</name>
        <dbReference type="ChEBI" id="CHEBI:29036"/>
    </cofactor>
    <text evidence="2">Binds 1 copper B ion per subunit.</text>
</comment>
<comment type="cofactor">
    <cofactor evidence="2">
        <name>heme b</name>
        <dbReference type="ChEBI" id="CHEBI:60344"/>
    </cofactor>
    <text evidence="2">Binds 1 low-spin heme b per subunit.</text>
</comment>
<comment type="cofactor">
    <cofactor evidence="2">
        <name>Fe(II)-heme o</name>
        <dbReference type="ChEBI" id="CHEBI:60530"/>
    </cofactor>
    <text evidence="2">Binds 1 high-spin heme o per subunit, also named heme o(3).</text>
</comment>
<comment type="subunit">
    <text evidence="2">The cytochrome bo(3) ubiquinol oxidase complex is a heterooctamer of two A chains, two B chains, two C chains and two D chains.</text>
</comment>
<comment type="subcellular location">
    <subcellularLocation>
        <location evidence="1">Cell membrane</location>
        <topology evidence="1">Multi-pass membrane protein</topology>
    </subcellularLocation>
</comment>
<comment type="miscellaneous">
    <text>Ubiquinol oxidase catalyzes the terminal step in the electron transport chain.</text>
</comment>
<comment type="similarity">
    <text evidence="4">Belongs to the heme-copper respiratory oxidase family.</text>
</comment>
<name>CYOB_BUCAI</name>